<dbReference type="EC" id="2.7.1.148" evidence="1"/>
<dbReference type="EMBL" id="CP000937">
    <property type="protein sequence ID" value="ABZ86898.1"/>
    <property type="molecule type" value="Genomic_DNA"/>
</dbReference>
<dbReference type="SMR" id="B0TVZ0"/>
<dbReference type="KEGG" id="fph:Fphi_0678"/>
<dbReference type="eggNOG" id="COG1947">
    <property type="taxonomic scope" value="Bacteria"/>
</dbReference>
<dbReference type="HOGENOM" id="CLU_053057_3_0_6"/>
<dbReference type="UniPathway" id="UPA00056">
    <property type="reaction ID" value="UER00094"/>
</dbReference>
<dbReference type="GO" id="GO:0050515">
    <property type="term" value="F:4-(cytidine 5'-diphospho)-2-C-methyl-D-erythritol kinase activity"/>
    <property type="evidence" value="ECO:0007669"/>
    <property type="project" value="UniProtKB-UniRule"/>
</dbReference>
<dbReference type="GO" id="GO:0005524">
    <property type="term" value="F:ATP binding"/>
    <property type="evidence" value="ECO:0007669"/>
    <property type="project" value="UniProtKB-UniRule"/>
</dbReference>
<dbReference type="GO" id="GO:0019288">
    <property type="term" value="P:isopentenyl diphosphate biosynthetic process, methylerythritol 4-phosphate pathway"/>
    <property type="evidence" value="ECO:0007669"/>
    <property type="project" value="UniProtKB-UniRule"/>
</dbReference>
<dbReference type="GO" id="GO:0016114">
    <property type="term" value="P:terpenoid biosynthetic process"/>
    <property type="evidence" value="ECO:0007669"/>
    <property type="project" value="InterPro"/>
</dbReference>
<dbReference type="Gene3D" id="3.30.230.10">
    <property type="match status" value="1"/>
</dbReference>
<dbReference type="Gene3D" id="3.30.70.890">
    <property type="entry name" value="GHMP kinase, C-terminal domain"/>
    <property type="match status" value="1"/>
</dbReference>
<dbReference type="HAMAP" id="MF_00061">
    <property type="entry name" value="IspE"/>
    <property type="match status" value="1"/>
</dbReference>
<dbReference type="InterPro" id="IPR013750">
    <property type="entry name" value="GHMP_kinase_C_dom"/>
</dbReference>
<dbReference type="InterPro" id="IPR036554">
    <property type="entry name" value="GHMP_kinase_C_sf"/>
</dbReference>
<dbReference type="InterPro" id="IPR006204">
    <property type="entry name" value="GHMP_kinase_N_dom"/>
</dbReference>
<dbReference type="InterPro" id="IPR004424">
    <property type="entry name" value="IspE"/>
</dbReference>
<dbReference type="InterPro" id="IPR020568">
    <property type="entry name" value="Ribosomal_Su5_D2-typ_SF"/>
</dbReference>
<dbReference type="InterPro" id="IPR014721">
    <property type="entry name" value="Ribsml_uS5_D2-typ_fold_subgr"/>
</dbReference>
<dbReference type="NCBIfam" id="TIGR00154">
    <property type="entry name" value="ispE"/>
    <property type="match status" value="1"/>
</dbReference>
<dbReference type="PANTHER" id="PTHR43527">
    <property type="entry name" value="4-DIPHOSPHOCYTIDYL-2-C-METHYL-D-ERYTHRITOL KINASE, CHLOROPLASTIC"/>
    <property type="match status" value="1"/>
</dbReference>
<dbReference type="PANTHER" id="PTHR43527:SF2">
    <property type="entry name" value="4-DIPHOSPHOCYTIDYL-2-C-METHYL-D-ERYTHRITOL KINASE, CHLOROPLASTIC"/>
    <property type="match status" value="1"/>
</dbReference>
<dbReference type="Pfam" id="PF08544">
    <property type="entry name" value="GHMP_kinases_C"/>
    <property type="match status" value="1"/>
</dbReference>
<dbReference type="Pfam" id="PF00288">
    <property type="entry name" value="GHMP_kinases_N"/>
    <property type="match status" value="1"/>
</dbReference>
<dbReference type="PIRSF" id="PIRSF010376">
    <property type="entry name" value="IspE"/>
    <property type="match status" value="1"/>
</dbReference>
<dbReference type="SUPFAM" id="SSF55060">
    <property type="entry name" value="GHMP Kinase, C-terminal domain"/>
    <property type="match status" value="1"/>
</dbReference>
<dbReference type="SUPFAM" id="SSF54211">
    <property type="entry name" value="Ribosomal protein S5 domain 2-like"/>
    <property type="match status" value="1"/>
</dbReference>
<gene>
    <name evidence="1" type="primary">ispE</name>
    <name type="ordered locus">Fphi_0678</name>
</gene>
<name>ISPE_FRAP2</name>
<sequence length="275" mass="31625">MANIKLKNYQSYAKINLFLHILNKRDDGYHNLQTWFTFLDLKDHISFRFNNSNKIEITSNIQIASKEDNLIYKAVKEFQEAYNIESIGVDIDIIKNIPMGAGLGGGSSNAATTLIALRDYYLPELSNEQMIPLATKLGADVPIFVYGRSAWAEGIGDVLYSKDFEQQYVVLVKPNIHISTKEFFESENLVKTKNMLPRDLSFDTSVMHNDFENVFFAKYPEFKSQLDEIDQDFRMTGTGSCFYLLSKDLNKLQQLARKVDKSLDKWVVKTLNYAY</sequence>
<organism>
    <name type="scientific">Francisella philomiragia subsp. philomiragia (strain ATCC 25017 / CCUG 19701 / FSC 153 / O#319-036)</name>
    <dbReference type="NCBI Taxonomy" id="484022"/>
    <lineage>
        <taxon>Bacteria</taxon>
        <taxon>Pseudomonadati</taxon>
        <taxon>Pseudomonadota</taxon>
        <taxon>Gammaproteobacteria</taxon>
        <taxon>Thiotrichales</taxon>
        <taxon>Francisellaceae</taxon>
        <taxon>Francisella</taxon>
    </lineage>
</organism>
<evidence type="ECO:0000255" key="1">
    <source>
        <dbReference type="HAMAP-Rule" id="MF_00061"/>
    </source>
</evidence>
<accession>B0TVZ0</accession>
<comment type="function">
    <text evidence="1">Catalyzes the phosphorylation of the position 2 hydroxy group of 4-diphosphocytidyl-2C-methyl-D-erythritol.</text>
</comment>
<comment type="catalytic activity">
    <reaction evidence="1">
        <text>4-CDP-2-C-methyl-D-erythritol + ATP = 4-CDP-2-C-methyl-D-erythritol 2-phosphate + ADP + H(+)</text>
        <dbReference type="Rhea" id="RHEA:18437"/>
        <dbReference type="ChEBI" id="CHEBI:15378"/>
        <dbReference type="ChEBI" id="CHEBI:30616"/>
        <dbReference type="ChEBI" id="CHEBI:57823"/>
        <dbReference type="ChEBI" id="CHEBI:57919"/>
        <dbReference type="ChEBI" id="CHEBI:456216"/>
        <dbReference type="EC" id="2.7.1.148"/>
    </reaction>
</comment>
<comment type="pathway">
    <text evidence="1">Isoprenoid biosynthesis; isopentenyl diphosphate biosynthesis via DXP pathway; isopentenyl diphosphate from 1-deoxy-D-xylulose 5-phosphate: step 3/6.</text>
</comment>
<comment type="similarity">
    <text evidence="1">Belongs to the GHMP kinase family. IspE subfamily.</text>
</comment>
<proteinExistence type="inferred from homology"/>
<keyword id="KW-0067">ATP-binding</keyword>
<keyword id="KW-0414">Isoprene biosynthesis</keyword>
<keyword id="KW-0418">Kinase</keyword>
<keyword id="KW-0547">Nucleotide-binding</keyword>
<keyword id="KW-0808">Transferase</keyword>
<reference key="1">
    <citation type="submission" date="2007-12" db="EMBL/GenBank/DDBJ databases">
        <title>Complete sequence of chromosome of Francisella philomiragia subsp. philomiragia ATCC 25017.</title>
        <authorList>
            <consortium name="US DOE Joint Genome Institute"/>
            <person name="Copeland A."/>
            <person name="Lucas S."/>
            <person name="Lapidus A."/>
            <person name="Barry K."/>
            <person name="Detter J.C."/>
            <person name="Glavina del Rio T."/>
            <person name="Hammon N."/>
            <person name="Israni S."/>
            <person name="Dalin E."/>
            <person name="Tice H."/>
            <person name="Pitluck S."/>
            <person name="Chain P."/>
            <person name="Malfatti S."/>
            <person name="Shin M."/>
            <person name="Vergez L."/>
            <person name="Schmutz J."/>
            <person name="Larimer F."/>
            <person name="Land M."/>
            <person name="Hauser L."/>
            <person name="Richardson P."/>
        </authorList>
    </citation>
    <scope>NUCLEOTIDE SEQUENCE [LARGE SCALE GENOMIC DNA]</scope>
    <source>
        <strain>ATCC 25017 / CCUG 19701 / FSC 153 / O#319-036</strain>
    </source>
</reference>
<protein>
    <recommendedName>
        <fullName evidence="1">4-diphosphocytidyl-2-C-methyl-D-erythritol kinase</fullName>
        <shortName evidence="1">CMK</shortName>
        <ecNumber evidence="1">2.7.1.148</ecNumber>
    </recommendedName>
    <alternativeName>
        <fullName evidence="1">4-(cytidine-5'-diphospho)-2-C-methyl-D-erythritol kinase</fullName>
    </alternativeName>
</protein>
<feature type="chain" id="PRO_1000075048" description="4-diphosphocytidyl-2-C-methyl-D-erythritol kinase">
    <location>
        <begin position="1"/>
        <end position="275"/>
    </location>
</feature>
<feature type="active site" evidence="1">
    <location>
        <position position="14"/>
    </location>
</feature>
<feature type="active site" evidence="1">
    <location>
        <position position="140"/>
    </location>
</feature>
<feature type="binding site" evidence="1">
    <location>
        <begin position="98"/>
        <end position="108"/>
    </location>
    <ligand>
        <name>ATP</name>
        <dbReference type="ChEBI" id="CHEBI:30616"/>
    </ligand>
</feature>